<dbReference type="EMBL" id="AC136777">
    <property type="status" value="NOT_ANNOTATED_CDS"/>
    <property type="molecule type" value="Genomic_DNA"/>
</dbReference>
<dbReference type="EMBL" id="BC037297">
    <property type="status" value="NOT_ANNOTATED_CDS"/>
    <property type="molecule type" value="mRNA"/>
</dbReference>
<dbReference type="BioMuta" id="HGNC:27233"/>
<dbReference type="DMDM" id="205831474"/>
<dbReference type="AGR" id="HGNC:27233"/>
<dbReference type="GeneCards" id="FAM87A"/>
<dbReference type="HGNC" id="HGNC:27233">
    <property type="gene designation" value="FAM87A"/>
</dbReference>
<dbReference type="neXtProt" id="NX_P0C7U9"/>
<dbReference type="InParanoid" id="P0C7U9"/>
<dbReference type="PAN-GO" id="P0C7U9">
    <property type="GO annotations" value="0 GO annotations based on evolutionary models"/>
</dbReference>
<dbReference type="Pharos" id="P0C7U9">
    <property type="development level" value="Tdark"/>
</dbReference>
<dbReference type="PRO" id="PR:P0C7U9"/>
<dbReference type="Proteomes" id="UP000005640">
    <property type="component" value="Unplaced"/>
</dbReference>
<dbReference type="RNAct" id="P0C7U9">
    <property type="molecule type" value="protein"/>
</dbReference>
<dbReference type="GO" id="GO:0016020">
    <property type="term" value="C:membrane"/>
    <property type="evidence" value="ECO:0007669"/>
    <property type="project" value="UniProtKB-SubCell"/>
</dbReference>
<keyword id="KW-0472">Membrane</keyword>
<keyword id="KW-1185">Reference proteome</keyword>
<keyword id="KW-0812">Transmembrane</keyword>
<keyword id="KW-1133">Transmembrane helix</keyword>
<accession>P0C7U9</accession>
<sequence>MTGTLERENWISGGKSLVLRKQHPGPLRPWRKRAAQLGGGCGWRTAVAPAKFCLWYVVPSWLWEPPGYLHSSLFLSILFQVTLLETALQSRPNLSLPLVRCGWACTQAMSTRSNCGSRSFLWAQTQADAASGLPRSRLGFLGLGGCGLIVKHGMTLRNWASFFVVFQAWSLMILQVLGDMLNIYYAYIQATLTLKVDVAPRLFFPEGGALKEHFSSMDSFQLREAGGTRIPRPALIYGRAVVTRTVTKAQSLKSALAWAALGCKHPVLSTLCEESQQGAWSEFRRF</sequence>
<reference key="1">
    <citation type="journal article" date="2006" name="Nature">
        <title>DNA sequence and analysis of human chromosome 8.</title>
        <authorList>
            <person name="Nusbaum C."/>
            <person name="Mikkelsen T.S."/>
            <person name="Zody M.C."/>
            <person name="Asakawa S."/>
            <person name="Taudien S."/>
            <person name="Garber M."/>
            <person name="Kodira C.D."/>
            <person name="Schueler M.G."/>
            <person name="Shimizu A."/>
            <person name="Whittaker C.A."/>
            <person name="Chang J.L."/>
            <person name="Cuomo C.A."/>
            <person name="Dewar K."/>
            <person name="FitzGerald M.G."/>
            <person name="Yang X."/>
            <person name="Allen N.R."/>
            <person name="Anderson S."/>
            <person name="Asakawa T."/>
            <person name="Blechschmidt K."/>
            <person name="Bloom T."/>
            <person name="Borowsky M.L."/>
            <person name="Butler J."/>
            <person name="Cook A."/>
            <person name="Corum B."/>
            <person name="DeArellano K."/>
            <person name="DeCaprio D."/>
            <person name="Dooley K.T."/>
            <person name="Dorris L. III"/>
            <person name="Engels R."/>
            <person name="Gloeckner G."/>
            <person name="Hafez N."/>
            <person name="Hagopian D.S."/>
            <person name="Hall J.L."/>
            <person name="Ishikawa S.K."/>
            <person name="Jaffe D.B."/>
            <person name="Kamat A."/>
            <person name="Kudoh J."/>
            <person name="Lehmann R."/>
            <person name="Lokitsang T."/>
            <person name="Macdonald P."/>
            <person name="Major J.E."/>
            <person name="Matthews C.D."/>
            <person name="Mauceli E."/>
            <person name="Menzel U."/>
            <person name="Mihalev A.H."/>
            <person name="Minoshima S."/>
            <person name="Murayama Y."/>
            <person name="Naylor J.W."/>
            <person name="Nicol R."/>
            <person name="Nguyen C."/>
            <person name="O'Leary S.B."/>
            <person name="O'Neill K."/>
            <person name="Parker S.C.J."/>
            <person name="Polley A."/>
            <person name="Raymond C.K."/>
            <person name="Reichwald K."/>
            <person name="Rodriguez J."/>
            <person name="Sasaki T."/>
            <person name="Schilhabel M."/>
            <person name="Siddiqui R."/>
            <person name="Smith C.L."/>
            <person name="Sneddon T.P."/>
            <person name="Talamas J.A."/>
            <person name="Tenzin P."/>
            <person name="Topham K."/>
            <person name="Venkataraman V."/>
            <person name="Wen G."/>
            <person name="Yamazaki S."/>
            <person name="Young S.K."/>
            <person name="Zeng Q."/>
            <person name="Zimmer A.R."/>
            <person name="Rosenthal A."/>
            <person name="Birren B.W."/>
            <person name="Platzer M."/>
            <person name="Shimizu N."/>
            <person name="Lander E.S."/>
        </authorList>
    </citation>
    <scope>NUCLEOTIDE SEQUENCE [LARGE SCALE GENOMIC DNA]</scope>
</reference>
<reference key="2">
    <citation type="journal article" date="2004" name="Genome Res.">
        <title>The status, quality, and expansion of the NIH full-length cDNA project: the Mammalian Gene Collection (MGC).</title>
        <authorList>
            <consortium name="The MGC Project Team"/>
        </authorList>
    </citation>
    <scope>NUCLEOTIDE SEQUENCE [LARGE SCALE MRNA]</scope>
</reference>
<comment type="subcellular location">
    <subcellularLocation>
        <location evidence="2">Membrane</location>
        <topology evidence="2">Multi-pass membrane protein</topology>
    </subcellularLocation>
</comment>
<comment type="similarity">
    <text evidence="2">Belongs to the FAM87 family.</text>
</comment>
<proteinExistence type="evidence at transcript level"/>
<gene>
    <name type="primary">FAM87A</name>
</gene>
<feature type="chain" id="PRO_0000343905" description="Protein FAM87A">
    <location>
        <begin position="1"/>
        <end position="286"/>
    </location>
</feature>
<feature type="transmembrane region" description="Helical" evidence="1">
    <location>
        <begin position="68"/>
        <end position="88"/>
    </location>
</feature>
<feature type="transmembrane region" description="Helical" evidence="1">
    <location>
        <begin position="161"/>
        <end position="181"/>
    </location>
</feature>
<name>FA87A_HUMAN</name>
<protein>
    <recommendedName>
        <fullName>Protein FAM87A</fullName>
    </recommendedName>
</protein>
<organism>
    <name type="scientific">Homo sapiens</name>
    <name type="common">Human</name>
    <dbReference type="NCBI Taxonomy" id="9606"/>
    <lineage>
        <taxon>Eukaryota</taxon>
        <taxon>Metazoa</taxon>
        <taxon>Chordata</taxon>
        <taxon>Craniata</taxon>
        <taxon>Vertebrata</taxon>
        <taxon>Euteleostomi</taxon>
        <taxon>Mammalia</taxon>
        <taxon>Eutheria</taxon>
        <taxon>Euarchontoglires</taxon>
        <taxon>Primates</taxon>
        <taxon>Haplorrhini</taxon>
        <taxon>Catarrhini</taxon>
        <taxon>Hominidae</taxon>
        <taxon>Homo</taxon>
    </lineage>
</organism>
<evidence type="ECO:0000255" key="1"/>
<evidence type="ECO:0000305" key="2"/>